<proteinExistence type="inferred from homology"/>
<evidence type="ECO:0000255" key="1">
    <source>
        <dbReference type="HAMAP-Rule" id="MF_00215"/>
    </source>
</evidence>
<gene>
    <name evidence="1" type="primary">coaA</name>
    <name type="ordered locus">CMM_2577</name>
</gene>
<reference key="1">
    <citation type="journal article" date="2008" name="J. Bacteriol.">
        <title>The genome sequence of the tomato-pathogenic actinomycete Clavibacter michiganensis subsp. michiganensis NCPPB382 reveals a large island involved in pathogenicity.</title>
        <authorList>
            <person name="Gartemann K.-H."/>
            <person name="Abt B."/>
            <person name="Bekel T."/>
            <person name="Burger A."/>
            <person name="Engemann J."/>
            <person name="Fluegel M."/>
            <person name="Gaigalat L."/>
            <person name="Goesmann A."/>
            <person name="Graefen I."/>
            <person name="Kalinowski J."/>
            <person name="Kaup O."/>
            <person name="Kirchner O."/>
            <person name="Krause L."/>
            <person name="Linke B."/>
            <person name="McHardy A."/>
            <person name="Meyer F."/>
            <person name="Pohle S."/>
            <person name="Rueckert C."/>
            <person name="Schneiker S."/>
            <person name="Zellermann E.-M."/>
            <person name="Puehler A."/>
            <person name="Eichenlaub R."/>
            <person name="Kaiser O."/>
            <person name="Bartels D."/>
        </authorList>
    </citation>
    <scope>NUCLEOTIDE SEQUENCE [LARGE SCALE GENOMIC DNA]</scope>
    <source>
        <strain>NCPPB 382</strain>
    </source>
</reference>
<comment type="catalytic activity">
    <reaction evidence="1">
        <text>(R)-pantothenate + ATP = (R)-4'-phosphopantothenate + ADP + H(+)</text>
        <dbReference type="Rhea" id="RHEA:16373"/>
        <dbReference type="ChEBI" id="CHEBI:10986"/>
        <dbReference type="ChEBI" id="CHEBI:15378"/>
        <dbReference type="ChEBI" id="CHEBI:29032"/>
        <dbReference type="ChEBI" id="CHEBI:30616"/>
        <dbReference type="ChEBI" id="CHEBI:456216"/>
        <dbReference type="EC" id="2.7.1.33"/>
    </reaction>
</comment>
<comment type="pathway">
    <text evidence="1">Cofactor biosynthesis; coenzyme A biosynthesis; CoA from (R)-pantothenate: step 1/5.</text>
</comment>
<comment type="subcellular location">
    <subcellularLocation>
        <location evidence="1">Cytoplasm</location>
    </subcellularLocation>
</comment>
<comment type="similarity">
    <text evidence="1">Belongs to the prokaryotic pantothenate kinase family.</text>
</comment>
<organism>
    <name type="scientific">Clavibacter michiganensis subsp. michiganensis (strain NCPPB 382)</name>
    <dbReference type="NCBI Taxonomy" id="443906"/>
    <lineage>
        <taxon>Bacteria</taxon>
        <taxon>Bacillati</taxon>
        <taxon>Actinomycetota</taxon>
        <taxon>Actinomycetes</taxon>
        <taxon>Micrococcales</taxon>
        <taxon>Microbacteriaceae</taxon>
        <taxon>Clavibacter</taxon>
    </lineage>
</organism>
<feature type="chain" id="PRO_0000325547" description="Pantothenate kinase">
    <location>
        <begin position="1"/>
        <end position="319"/>
    </location>
</feature>
<feature type="binding site" evidence="1">
    <location>
        <begin position="101"/>
        <end position="108"/>
    </location>
    <ligand>
        <name>ATP</name>
        <dbReference type="ChEBI" id="CHEBI:30616"/>
    </ligand>
</feature>
<keyword id="KW-0067">ATP-binding</keyword>
<keyword id="KW-0173">Coenzyme A biosynthesis</keyword>
<keyword id="KW-0963">Cytoplasm</keyword>
<keyword id="KW-0418">Kinase</keyword>
<keyword id="KW-0547">Nucleotide-binding</keyword>
<keyword id="KW-0808">Transferase</keyword>
<name>COAA_CLAM3</name>
<accession>A5CU73</accession>
<protein>
    <recommendedName>
        <fullName evidence="1">Pantothenate kinase</fullName>
        <ecNumber evidence="1">2.7.1.33</ecNumber>
    </recommendedName>
    <alternativeName>
        <fullName evidence="1">Pantothenic acid kinase</fullName>
    </alternativeName>
</protein>
<dbReference type="EC" id="2.7.1.33" evidence="1"/>
<dbReference type="EMBL" id="AM711867">
    <property type="protein sequence ID" value="CAN02660.1"/>
    <property type="molecule type" value="Genomic_DNA"/>
</dbReference>
<dbReference type="RefSeq" id="WP_012039266.1">
    <property type="nucleotide sequence ID" value="NC_009480.1"/>
</dbReference>
<dbReference type="SMR" id="A5CU73"/>
<dbReference type="GeneID" id="92948580"/>
<dbReference type="KEGG" id="cmi:CMM_2577"/>
<dbReference type="eggNOG" id="COG1072">
    <property type="taxonomic scope" value="Bacteria"/>
</dbReference>
<dbReference type="HOGENOM" id="CLU_053818_1_1_11"/>
<dbReference type="OrthoDB" id="1550976at2"/>
<dbReference type="UniPathway" id="UPA00241">
    <property type="reaction ID" value="UER00352"/>
</dbReference>
<dbReference type="Proteomes" id="UP000001564">
    <property type="component" value="Chromosome"/>
</dbReference>
<dbReference type="GO" id="GO:0005737">
    <property type="term" value="C:cytoplasm"/>
    <property type="evidence" value="ECO:0007669"/>
    <property type="project" value="UniProtKB-SubCell"/>
</dbReference>
<dbReference type="GO" id="GO:0005524">
    <property type="term" value="F:ATP binding"/>
    <property type="evidence" value="ECO:0007669"/>
    <property type="project" value="UniProtKB-UniRule"/>
</dbReference>
<dbReference type="GO" id="GO:0004594">
    <property type="term" value="F:pantothenate kinase activity"/>
    <property type="evidence" value="ECO:0007669"/>
    <property type="project" value="UniProtKB-UniRule"/>
</dbReference>
<dbReference type="GO" id="GO:0015937">
    <property type="term" value="P:coenzyme A biosynthetic process"/>
    <property type="evidence" value="ECO:0007669"/>
    <property type="project" value="UniProtKB-UniRule"/>
</dbReference>
<dbReference type="CDD" id="cd02025">
    <property type="entry name" value="PanK"/>
    <property type="match status" value="1"/>
</dbReference>
<dbReference type="Gene3D" id="3.40.50.300">
    <property type="entry name" value="P-loop containing nucleotide triphosphate hydrolases"/>
    <property type="match status" value="1"/>
</dbReference>
<dbReference type="HAMAP" id="MF_00215">
    <property type="entry name" value="Pantothen_kinase_1"/>
    <property type="match status" value="1"/>
</dbReference>
<dbReference type="InterPro" id="IPR027417">
    <property type="entry name" value="P-loop_NTPase"/>
</dbReference>
<dbReference type="InterPro" id="IPR004566">
    <property type="entry name" value="PanK"/>
</dbReference>
<dbReference type="InterPro" id="IPR006083">
    <property type="entry name" value="PRK/URK"/>
</dbReference>
<dbReference type="NCBIfam" id="TIGR00554">
    <property type="entry name" value="panK_bact"/>
    <property type="match status" value="1"/>
</dbReference>
<dbReference type="PANTHER" id="PTHR10285">
    <property type="entry name" value="URIDINE KINASE"/>
    <property type="match status" value="1"/>
</dbReference>
<dbReference type="Pfam" id="PF00485">
    <property type="entry name" value="PRK"/>
    <property type="match status" value="1"/>
</dbReference>
<dbReference type="PIRSF" id="PIRSF000545">
    <property type="entry name" value="Pantothenate_kin"/>
    <property type="match status" value="1"/>
</dbReference>
<dbReference type="SUPFAM" id="SSF52540">
    <property type="entry name" value="P-loop containing nucleoside triphosphate hydrolases"/>
    <property type="match status" value="1"/>
</dbReference>
<sequence length="319" mass="35665">MPDTATGHPTSHGNVSPFVEIARADWAALAPATHLPLRETELVQLRGIGDRLDMHEVEDVYLPLSRLLNLYVTGTKKLHRDTSAFLGERAKSTPFIIGVAGSVAVGKSTVARLLREMLARWDDTPRVELVTTDGFLHPNAELQRRGLMERKGFPESYDRRALLRFVTQVKSGVPEVRAPFYSHLAYDIVPGAEVVVRQPDVLIIEGLNVLQPAASGAKLAVSDLFDFSIYVDARTHDIAQWYEERFLSLQRGAFSNPRSYFHRYAELSPAEAVARARGIWSAINEPNLEQNIRPTRSRATLVLRKDADHSVANVLLRKL</sequence>